<proteinExistence type="inferred from homology"/>
<dbReference type="EC" id="2.7.11.33" evidence="1"/>
<dbReference type="EC" id="2.7.4.28" evidence="1"/>
<dbReference type="EMBL" id="CP000555">
    <property type="protein sequence ID" value="ABM94482.1"/>
    <property type="molecule type" value="Genomic_DNA"/>
</dbReference>
<dbReference type="RefSeq" id="WP_011829119.1">
    <property type="nucleotide sequence ID" value="NC_008825.1"/>
</dbReference>
<dbReference type="SMR" id="A2SFZ3"/>
<dbReference type="STRING" id="420662.Mpe_A1520"/>
<dbReference type="KEGG" id="mpt:Mpe_A1520"/>
<dbReference type="eggNOG" id="COG1806">
    <property type="taxonomic scope" value="Bacteria"/>
</dbReference>
<dbReference type="HOGENOM" id="CLU_046206_1_0_4"/>
<dbReference type="Proteomes" id="UP000000366">
    <property type="component" value="Chromosome"/>
</dbReference>
<dbReference type="GO" id="GO:0043531">
    <property type="term" value="F:ADP binding"/>
    <property type="evidence" value="ECO:0007669"/>
    <property type="project" value="UniProtKB-UniRule"/>
</dbReference>
<dbReference type="GO" id="GO:0005524">
    <property type="term" value="F:ATP binding"/>
    <property type="evidence" value="ECO:0007669"/>
    <property type="project" value="InterPro"/>
</dbReference>
<dbReference type="GO" id="GO:0016776">
    <property type="term" value="F:phosphotransferase activity, phosphate group as acceptor"/>
    <property type="evidence" value="ECO:0007669"/>
    <property type="project" value="UniProtKB-UniRule"/>
</dbReference>
<dbReference type="GO" id="GO:0004674">
    <property type="term" value="F:protein serine/threonine kinase activity"/>
    <property type="evidence" value="ECO:0007669"/>
    <property type="project" value="UniProtKB-UniRule"/>
</dbReference>
<dbReference type="HAMAP" id="MF_01062">
    <property type="entry name" value="PSRP"/>
    <property type="match status" value="1"/>
</dbReference>
<dbReference type="InterPro" id="IPR005177">
    <property type="entry name" value="Kinase-pyrophosphorylase"/>
</dbReference>
<dbReference type="InterPro" id="IPR026530">
    <property type="entry name" value="PSRP"/>
</dbReference>
<dbReference type="NCBIfam" id="NF003742">
    <property type="entry name" value="PRK05339.1"/>
    <property type="match status" value="1"/>
</dbReference>
<dbReference type="PANTHER" id="PTHR31756">
    <property type="entry name" value="PYRUVATE, PHOSPHATE DIKINASE REGULATORY PROTEIN 1, CHLOROPLASTIC"/>
    <property type="match status" value="1"/>
</dbReference>
<dbReference type="PANTHER" id="PTHR31756:SF3">
    <property type="entry name" value="PYRUVATE, PHOSPHATE DIKINASE REGULATORY PROTEIN 1, CHLOROPLASTIC"/>
    <property type="match status" value="1"/>
</dbReference>
<dbReference type="Pfam" id="PF03618">
    <property type="entry name" value="Kinase-PPPase"/>
    <property type="match status" value="1"/>
</dbReference>
<gene>
    <name type="ordered locus">Mpe_A1520</name>
</gene>
<evidence type="ECO:0000255" key="1">
    <source>
        <dbReference type="HAMAP-Rule" id="MF_01062"/>
    </source>
</evidence>
<reference key="1">
    <citation type="journal article" date="2007" name="J. Bacteriol.">
        <title>Whole-genome analysis of the methyl tert-butyl ether-degrading beta-proteobacterium Methylibium petroleiphilum PM1.</title>
        <authorList>
            <person name="Kane S.R."/>
            <person name="Chakicherla A.Y."/>
            <person name="Chain P.S.G."/>
            <person name="Schmidt R."/>
            <person name="Shin M.W."/>
            <person name="Legler T.C."/>
            <person name="Scow K.M."/>
            <person name="Larimer F.W."/>
            <person name="Lucas S.M."/>
            <person name="Richardson P.M."/>
            <person name="Hristova K.R."/>
        </authorList>
    </citation>
    <scope>NUCLEOTIDE SEQUENCE [LARGE SCALE GENOMIC DNA]</scope>
    <source>
        <strain>ATCC BAA-1232 / LMG 22953 / PM1</strain>
    </source>
</reference>
<accession>A2SFZ3</accession>
<comment type="function">
    <text evidence="1">Bifunctional serine/threonine kinase and phosphorylase involved in the regulation of the phosphoenolpyruvate synthase (PEPS) by catalyzing its phosphorylation/dephosphorylation.</text>
</comment>
<comment type="catalytic activity">
    <reaction evidence="1">
        <text>[pyruvate, water dikinase] + ADP = [pyruvate, water dikinase]-phosphate + AMP + H(+)</text>
        <dbReference type="Rhea" id="RHEA:46020"/>
        <dbReference type="Rhea" id="RHEA-COMP:11425"/>
        <dbReference type="Rhea" id="RHEA-COMP:11426"/>
        <dbReference type="ChEBI" id="CHEBI:15378"/>
        <dbReference type="ChEBI" id="CHEBI:43176"/>
        <dbReference type="ChEBI" id="CHEBI:68546"/>
        <dbReference type="ChEBI" id="CHEBI:456215"/>
        <dbReference type="ChEBI" id="CHEBI:456216"/>
        <dbReference type="EC" id="2.7.11.33"/>
    </reaction>
</comment>
<comment type="catalytic activity">
    <reaction evidence="1">
        <text>[pyruvate, water dikinase]-phosphate + phosphate + H(+) = [pyruvate, water dikinase] + diphosphate</text>
        <dbReference type="Rhea" id="RHEA:48580"/>
        <dbReference type="Rhea" id="RHEA-COMP:11425"/>
        <dbReference type="Rhea" id="RHEA-COMP:11426"/>
        <dbReference type="ChEBI" id="CHEBI:15378"/>
        <dbReference type="ChEBI" id="CHEBI:33019"/>
        <dbReference type="ChEBI" id="CHEBI:43176"/>
        <dbReference type="ChEBI" id="CHEBI:43474"/>
        <dbReference type="ChEBI" id="CHEBI:68546"/>
        <dbReference type="EC" id="2.7.4.28"/>
    </reaction>
</comment>
<comment type="similarity">
    <text evidence="1">Belongs to the pyruvate, phosphate/water dikinase regulatory protein family. PSRP subfamily.</text>
</comment>
<protein>
    <recommendedName>
        <fullName evidence="1">Putative phosphoenolpyruvate synthase regulatory protein</fullName>
        <shortName evidence="1">PEP synthase regulatory protein</shortName>
        <shortName evidence="1">PSRP</shortName>
        <ecNumber evidence="1">2.7.11.33</ecNumber>
        <ecNumber evidence="1">2.7.4.28</ecNumber>
    </recommendedName>
    <alternativeName>
        <fullName evidence="1">Pyruvate, water dikinase regulatory protein</fullName>
    </alternativeName>
</protein>
<sequence>MPNRTVFFVSDGTGITAETFGNSILAQFSAKPRHVRRPFIDTPDKAYQVVREINDTAGREGKRPIVFITLIDTEVRGIIRSAHCLVLDMLGTFVEPLEAEFGIKSNHRVGRFDDISKSQEYTDRIEAINFSLAHDDGQSSKNLDIADVILVGVSRSGKTPTSLYLAMQHGIKAANYPLIPEDFDRGALPSALVPHKKKCFGLTIAPERLREIRHERRPNSKYASLENCRLEVSAAESMMGREGIAWLSSTHKSIEEIATTILRDIRPDRLIY</sequence>
<feature type="chain" id="PRO_0000316700" description="Putative phosphoenolpyruvate synthase regulatory protein">
    <location>
        <begin position="1"/>
        <end position="272"/>
    </location>
</feature>
<feature type="binding site" evidence="1">
    <location>
        <begin position="152"/>
        <end position="159"/>
    </location>
    <ligand>
        <name>ADP</name>
        <dbReference type="ChEBI" id="CHEBI:456216"/>
    </ligand>
</feature>
<organism>
    <name type="scientific">Methylibium petroleiphilum (strain ATCC BAA-1232 / LMG 22953 / PM1)</name>
    <dbReference type="NCBI Taxonomy" id="420662"/>
    <lineage>
        <taxon>Bacteria</taxon>
        <taxon>Pseudomonadati</taxon>
        <taxon>Pseudomonadota</taxon>
        <taxon>Betaproteobacteria</taxon>
        <taxon>Burkholderiales</taxon>
        <taxon>Sphaerotilaceae</taxon>
        <taxon>Methylibium</taxon>
    </lineage>
</organism>
<keyword id="KW-0418">Kinase</keyword>
<keyword id="KW-0547">Nucleotide-binding</keyword>
<keyword id="KW-1185">Reference proteome</keyword>
<keyword id="KW-0723">Serine/threonine-protein kinase</keyword>
<keyword id="KW-0808">Transferase</keyword>
<name>PSRP_METPP</name>